<dbReference type="EC" id="3.1.3.5" evidence="1"/>
<dbReference type="EC" id="3.1.3.6" evidence="1"/>
<dbReference type="EC" id="3.6.1.11" evidence="1"/>
<dbReference type="EMBL" id="BA000021">
    <property type="protein sequence ID" value="BAC24453.1"/>
    <property type="molecule type" value="Genomic_DNA"/>
</dbReference>
<dbReference type="SMR" id="Q8D2P7"/>
<dbReference type="STRING" id="36870.gene:10368803"/>
<dbReference type="KEGG" id="wbr:surE"/>
<dbReference type="eggNOG" id="COG0496">
    <property type="taxonomic scope" value="Bacteria"/>
</dbReference>
<dbReference type="HOGENOM" id="CLU_045192_1_2_6"/>
<dbReference type="OrthoDB" id="9780815at2"/>
<dbReference type="Proteomes" id="UP000000562">
    <property type="component" value="Chromosome"/>
</dbReference>
<dbReference type="GO" id="GO:0005737">
    <property type="term" value="C:cytoplasm"/>
    <property type="evidence" value="ECO:0007669"/>
    <property type="project" value="UniProtKB-SubCell"/>
</dbReference>
<dbReference type="GO" id="GO:0008254">
    <property type="term" value="F:3'-nucleotidase activity"/>
    <property type="evidence" value="ECO:0007669"/>
    <property type="project" value="UniProtKB-UniRule"/>
</dbReference>
<dbReference type="GO" id="GO:0008253">
    <property type="term" value="F:5'-nucleotidase activity"/>
    <property type="evidence" value="ECO:0007669"/>
    <property type="project" value="UniProtKB-UniRule"/>
</dbReference>
<dbReference type="GO" id="GO:0004309">
    <property type="term" value="F:exopolyphosphatase activity"/>
    <property type="evidence" value="ECO:0007669"/>
    <property type="project" value="UniProtKB-UniRule"/>
</dbReference>
<dbReference type="GO" id="GO:0046872">
    <property type="term" value="F:metal ion binding"/>
    <property type="evidence" value="ECO:0007669"/>
    <property type="project" value="UniProtKB-UniRule"/>
</dbReference>
<dbReference type="GO" id="GO:0000166">
    <property type="term" value="F:nucleotide binding"/>
    <property type="evidence" value="ECO:0007669"/>
    <property type="project" value="UniProtKB-KW"/>
</dbReference>
<dbReference type="FunFam" id="3.40.1210.10:FF:000001">
    <property type="entry name" value="5'/3'-nucleotidase SurE"/>
    <property type="match status" value="1"/>
</dbReference>
<dbReference type="Gene3D" id="3.40.1210.10">
    <property type="entry name" value="Survival protein SurE-like phosphatase/nucleotidase"/>
    <property type="match status" value="1"/>
</dbReference>
<dbReference type="HAMAP" id="MF_00060">
    <property type="entry name" value="SurE"/>
    <property type="match status" value="1"/>
</dbReference>
<dbReference type="InterPro" id="IPR030048">
    <property type="entry name" value="SurE"/>
</dbReference>
<dbReference type="InterPro" id="IPR002828">
    <property type="entry name" value="SurE-like_Pase/nucleotidase"/>
</dbReference>
<dbReference type="InterPro" id="IPR036523">
    <property type="entry name" value="SurE-like_sf"/>
</dbReference>
<dbReference type="NCBIfam" id="NF001490">
    <property type="entry name" value="PRK00346.1-4"/>
    <property type="match status" value="1"/>
</dbReference>
<dbReference type="NCBIfam" id="TIGR00087">
    <property type="entry name" value="surE"/>
    <property type="match status" value="1"/>
</dbReference>
<dbReference type="PANTHER" id="PTHR30457">
    <property type="entry name" value="5'-NUCLEOTIDASE SURE"/>
    <property type="match status" value="1"/>
</dbReference>
<dbReference type="PANTHER" id="PTHR30457:SF12">
    <property type="entry name" value="5'_3'-NUCLEOTIDASE SURE"/>
    <property type="match status" value="1"/>
</dbReference>
<dbReference type="Pfam" id="PF01975">
    <property type="entry name" value="SurE"/>
    <property type="match status" value="1"/>
</dbReference>
<dbReference type="SUPFAM" id="SSF64167">
    <property type="entry name" value="SurE-like"/>
    <property type="match status" value="1"/>
</dbReference>
<keyword id="KW-0963">Cytoplasm</keyword>
<keyword id="KW-0378">Hydrolase</keyword>
<keyword id="KW-0479">Metal-binding</keyword>
<keyword id="KW-0547">Nucleotide-binding</keyword>
<keyword id="KW-1185">Reference proteome</keyword>
<proteinExistence type="inferred from homology"/>
<reference key="1">
    <citation type="journal article" date="2002" name="Nat. Genet.">
        <title>Genome sequence of the endocellular obligate symbiont of tsetse flies, Wigglesworthia glossinidia.</title>
        <authorList>
            <person name="Akman L."/>
            <person name="Yamashita A."/>
            <person name="Watanabe H."/>
            <person name="Oshima K."/>
            <person name="Shiba T."/>
            <person name="Hattori M."/>
            <person name="Aksoy S."/>
        </authorList>
    </citation>
    <scope>NUCLEOTIDE SEQUENCE [LARGE SCALE GENOMIC DNA]</scope>
</reference>
<name>SURE_WIGBR</name>
<protein>
    <recommendedName>
        <fullName evidence="1">5'/3'-nucleotidase SurE</fullName>
        <ecNumber evidence="1">3.1.3.5</ecNumber>
        <ecNumber evidence="1">3.1.3.6</ecNumber>
    </recommendedName>
    <alternativeName>
        <fullName evidence="1">Exopolyphosphatase</fullName>
        <ecNumber evidence="1">3.6.1.11</ecNumber>
    </alternativeName>
    <alternativeName>
        <fullName evidence="1">Nucleoside monophosphate phosphohydrolase</fullName>
    </alternativeName>
</protein>
<organism>
    <name type="scientific">Wigglesworthia glossinidia brevipalpis</name>
    <dbReference type="NCBI Taxonomy" id="36870"/>
    <lineage>
        <taxon>Bacteria</taxon>
        <taxon>Pseudomonadati</taxon>
        <taxon>Pseudomonadota</taxon>
        <taxon>Gammaproteobacteria</taxon>
        <taxon>Enterobacterales</taxon>
        <taxon>Erwiniaceae</taxon>
        <taxon>Wigglesworthia</taxon>
    </lineage>
</organism>
<comment type="function">
    <text evidence="1">Nucleotidase with a broad substrate specificity as it can dephosphorylate various ribo- and deoxyribonucleoside 5'-monophosphates and ribonucleoside 3'-monophosphates with highest affinity to 3'-AMP. Also hydrolyzes polyphosphate (exopolyphosphatase activity) with the preference for short-chain-length substrates (P20-25). Might be involved in the regulation of dNTP and NTP pools, and in the turnover of 3'-mononucleotides produced by numerous intracellular RNases (T1, T2, and F) during the degradation of various RNAs.</text>
</comment>
<comment type="catalytic activity">
    <reaction evidence="1">
        <text>a ribonucleoside 5'-phosphate + H2O = a ribonucleoside + phosphate</text>
        <dbReference type="Rhea" id="RHEA:12484"/>
        <dbReference type="ChEBI" id="CHEBI:15377"/>
        <dbReference type="ChEBI" id="CHEBI:18254"/>
        <dbReference type="ChEBI" id="CHEBI:43474"/>
        <dbReference type="ChEBI" id="CHEBI:58043"/>
        <dbReference type="EC" id="3.1.3.5"/>
    </reaction>
</comment>
<comment type="catalytic activity">
    <reaction evidence="1">
        <text>a ribonucleoside 3'-phosphate + H2O = a ribonucleoside + phosphate</text>
        <dbReference type="Rhea" id="RHEA:10144"/>
        <dbReference type="ChEBI" id="CHEBI:13197"/>
        <dbReference type="ChEBI" id="CHEBI:15377"/>
        <dbReference type="ChEBI" id="CHEBI:18254"/>
        <dbReference type="ChEBI" id="CHEBI:43474"/>
        <dbReference type="EC" id="3.1.3.6"/>
    </reaction>
</comment>
<comment type="catalytic activity">
    <reaction evidence="1">
        <text>[phosphate](n) + H2O = [phosphate](n-1) + phosphate + H(+)</text>
        <dbReference type="Rhea" id="RHEA:21528"/>
        <dbReference type="Rhea" id="RHEA-COMP:9859"/>
        <dbReference type="Rhea" id="RHEA-COMP:14279"/>
        <dbReference type="ChEBI" id="CHEBI:15377"/>
        <dbReference type="ChEBI" id="CHEBI:15378"/>
        <dbReference type="ChEBI" id="CHEBI:16838"/>
        <dbReference type="ChEBI" id="CHEBI:43474"/>
        <dbReference type="EC" id="3.6.1.11"/>
    </reaction>
</comment>
<comment type="cofactor">
    <cofactor evidence="1">
        <name>a divalent metal cation</name>
        <dbReference type="ChEBI" id="CHEBI:60240"/>
    </cofactor>
    <text evidence="1">Binds 1 divalent metal cation per subunit.</text>
</comment>
<comment type="subcellular location">
    <subcellularLocation>
        <location evidence="1">Cytoplasm</location>
    </subcellularLocation>
</comment>
<comment type="similarity">
    <text evidence="1">Belongs to the SurE nucleotidase family.</text>
</comment>
<sequence>MNILLSNDDGIYSPGIQKLSKKLKKFLNVQVIAPSCDKSGSSSSLTINNPLKVHKFSNGDITVYSGTPIDCVYLGINFFMKPKPDFVVSGINLGANLGDDVFYSGTVGAAMEGRYLKYSSLAISLDGNKHLDVAVEIVYKFLKFLLNNPFRKKYILNINIPDSPLKYIKGFKITKCGRKNFKNTVIKSKDSENKNIFWIGPKTNCYNESIGTDFHAIKNNYISVTPLLSNLTNNKEINSISNWFENFYKS</sequence>
<gene>
    <name evidence="1" type="primary">surE</name>
    <name type="ordered locus">WIGBR3070</name>
</gene>
<feature type="chain" id="PRO_0000111853" description="5'/3'-nucleotidase SurE">
    <location>
        <begin position="1"/>
        <end position="250"/>
    </location>
</feature>
<feature type="binding site" evidence="1">
    <location>
        <position position="8"/>
    </location>
    <ligand>
        <name>a divalent metal cation</name>
        <dbReference type="ChEBI" id="CHEBI:60240"/>
    </ligand>
</feature>
<feature type="binding site" evidence="1">
    <location>
        <position position="9"/>
    </location>
    <ligand>
        <name>a divalent metal cation</name>
        <dbReference type="ChEBI" id="CHEBI:60240"/>
    </ligand>
</feature>
<feature type="binding site" evidence="1">
    <location>
        <position position="39"/>
    </location>
    <ligand>
        <name>a divalent metal cation</name>
        <dbReference type="ChEBI" id="CHEBI:60240"/>
    </ligand>
</feature>
<feature type="binding site" evidence="1">
    <location>
        <position position="92"/>
    </location>
    <ligand>
        <name>a divalent metal cation</name>
        <dbReference type="ChEBI" id="CHEBI:60240"/>
    </ligand>
</feature>
<accession>Q8D2P7</accession>
<evidence type="ECO:0000255" key="1">
    <source>
        <dbReference type="HAMAP-Rule" id="MF_00060"/>
    </source>
</evidence>